<sequence>MSDTYLVAASGLAVCFFVLYLLRPKTALPPGPPKLPLIGNLHQLGKKPMYERCQEWHRQFGKLISLKLGFDNVVVIGSSQIARDLLDKKGAMYSSRPKFVMAHENVTKGFHTATLPYGPRWRLHNRMQLSVLNKRIVTRCRQVQEFESLQLIHELLFTNDFHPRFQRWANSLQTGLGYGQRLAKGDECNIHEMEHISRVFREIFATGTWLVDLFPALNHLPPLLAPWKGVAEQHYNRTIELFQLNTAAALSKTSWNWTKKIRSLTESQGLPPDEVNFLVGVMAEAGGDTTGVVLDMFTLAAALHPEKMAIAQKEIDTVVGTDRLPNFGDVDKLPYLAALIKECLRWHPAAPFGLPHSVMQDDTYDGYHIPAGTTIIASQWSINFDPETFPNPYEFRPERYLENPDLPISSFGFGRRACPGRYFAMDSLFISISRVLWTFNIRPIKQGKDDPPMPAWEFVMDGALLRPAPFKALFSARDIHRQRFVIKEWAAAEKSVDVEALYDAIEPAGGDFSAQEKEEPVLVA</sequence>
<proteinExistence type="evidence at protein level"/>
<keyword id="KW-0349">Heme</keyword>
<keyword id="KW-0408">Iron</keyword>
<keyword id="KW-0472">Membrane</keyword>
<keyword id="KW-0479">Metal-binding</keyword>
<keyword id="KW-0503">Monooxygenase</keyword>
<keyword id="KW-0560">Oxidoreductase</keyword>
<keyword id="KW-1185">Reference proteome</keyword>
<keyword id="KW-0812">Transmembrane</keyword>
<keyword id="KW-1133">Transmembrane helix</keyword>
<protein>
    <recommendedName>
        <fullName evidence="4">Cytochrome P450 monooxygenase drtD</fullName>
        <ecNumber evidence="3">1.-.-.-</ecNumber>
    </recommendedName>
    <alternativeName>
        <fullName evidence="4">Drimane-type sesquiterpene ester biosynthesis cluster protein D</fullName>
    </alternativeName>
</protein>
<reference key="1">
    <citation type="journal article" date="2016" name="Genome Announc.">
        <title>Draft genome sequences of fungus Aspergillus calidoustus.</title>
        <authorList>
            <person name="Horn F."/>
            <person name="Linde J."/>
            <person name="Mattern D.J."/>
            <person name="Walther G."/>
            <person name="Guthke R."/>
            <person name="Scherlach K."/>
            <person name="Martin K."/>
            <person name="Brakhage A.A."/>
            <person name="Petzke L."/>
            <person name="Valiante V."/>
        </authorList>
    </citation>
    <scope>NUCLEOTIDE SEQUENCE [LARGE SCALE GENOMIC DNA]</scope>
    <source>
        <strain>SF006504</strain>
    </source>
</reference>
<reference key="2">
    <citation type="journal article" date="2021" name="Angew. Chem. Int. Ed.">
        <title>Biosynthesis of fungal drimane-type sesquiterpene esters.</title>
        <authorList>
            <person name="Huang Y."/>
            <person name="Hoefgen S."/>
            <person name="Valiante V."/>
        </authorList>
    </citation>
    <scope>FUNCTION</scope>
    <scope>DISRUPTION PHENOTYPE</scope>
    <scope>CATALYTIC ACTIVITY</scope>
    <scope>PATHWAY</scope>
</reference>
<evidence type="ECO:0000250" key="1">
    <source>
        <dbReference type="UniProtKB" id="P04798"/>
    </source>
</evidence>
<evidence type="ECO:0000255" key="2"/>
<evidence type="ECO:0000269" key="3">
    <source>
    </source>
</evidence>
<evidence type="ECO:0000303" key="4">
    <source>
    </source>
</evidence>
<evidence type="ECO:0000305" key="5"/>
<dbReference type="EC" id="1.-.-.-" evidence="3"/>
<dbReference type="EMBL" id="CDMC01000002">
    <property type="protein sequence ID" value="CEN60544.1"/>
    <property type="molecule type" value="Genomic_DNA"/>
</dbReference>
<dbReference type="SMR" id="A0A0U5GRB4"/>
<dbReference type="STRING" id="454130.A0A0U5GRB4"/>
<dbReference type="OMA" id="IPNIWVM"/>
<dbReference type="OrthoDB" id="1470350at2759"/>
<dbReference type="UniPathway" id="UPA00213"/>
<dbReference type="Proteomes" id="UP000054771">
    <property type="component" value="Unassembled WGS sequence"/>
</dbReference>
<dbReference type="GO" id="GO:0016020">
    <property type="term" value="C:membrane"/>
    <property type="evidence" value="ECO:0007669"/>
    <property type="project" value="UniProtKB-SubCell"/>
</dbReference>
<dbReference type="GO" id="GO:0020037">
    <property type="term" value="F:heme binding"/>
    <property type="evidence" value="ECO:0007669"/>
    <property type="project" value="InterPro"/>
</dbReference>
<dbReference type="GO" id="GO:0005506">
    <property type="term" value="F:iron ion binding"/>
    <property type="evidence" value="ECO:0007669"/>
    <property type="project" value="InterPro"/>
</dbReference>
<dbReference type="GO" id="GO:0004497">
    <property type="term" value="F:monooxygenase activity"/>
    <property type="evidence" value="ECO:0007669"/>
    <property type="project" value="UniProtKB-KW"/>
</dbReference>
<dbReference type="GO" id="GO:0016705">
    <property type="term" value="F:oxidoreductase activity, acting on paired donors, with incorporation or reduction of molecular oxygen"/>
    <property type="evidence" value="ECO:0007669"/>
    <property type="project" value="InterPro"/>
</dbReference>
<dbReference type="GO" id="GO:0016114">
    <property type="term" value="P:terpenoid biosynthetic process"/>
    <property type="evidence" value="ECO:0007669"/>
    <property type="project" value="UniProtKB-UniPathway"/>
</dbReference>
<dbReference type="CDD" id="cd11065">
    <property type="entry name" value="CYP64-like"/>
    <property type="match status" value="1"/>
</dbReference>
<dbReference type="Gene3D" id="1.10.630.10">
    <property type="entry name" value="Cytochrome P450"/>
    <property type="match status" value="1"/>
</dbReference>
<dbReference type="InterPro" id="IPR001128">
    <property type="entry name" value="Cyt_P450"/>
</dbReference>
<dbReference type="InterPro" id="IPR017972">
    <property type="entry name" value="Cyt_P450_CS"/>
</dbReference>
<dbReference type="InterPro" id="IPR002401">
    <property type="entry name" value="Cyt_P450_E_grp-I"/>
</dbReference>
<dbReference type="InterPro" id="IPR036396">
    <property type="entry name" value="Cyt_P450_sf"/>
</dbReference>
<dbReference type="InterPro" id="IPR050364">
    <property type="entry name" value="Cytochrome_P450_fung"/>
</dbReference>
<dbReference type="PANTHER" id="PTHR46300:SF1">
    <property type="entry name" value="P450, PUTATIVE (EUROFUNG)-RELATED"/>
    <property type="match status" value="1"/>
</dbReference>
<dbReference type="PANTHER" id="PTHR46300">
    <property type="entry name" value="P450, PUTATIVE (EUROFUNG)-RELATED-RELATED"/>
    <property type="match status" value="1"/>
</dbReference>
<dbReference type="Pfam" id="PF00067">
    <property type="entry name" value="p450"/>
    <property type="match status" value="1"/>
</dbReference>
<dbReference type="PRINTS" id="PR00463">
    <property type="entry name" value="EP450I"/>
</dbReference>
<dbReference type="PRINTS" id="PR00385">
    <property type="entry name" value="P450"/>
</dbReference>
<dbReference type="SUPFAM" id="SSF48264">
    <property type="entry name" value="Cytochrome P450"/>
    <property type="match status" value="1"/>
</dbReference>
<dbReference type="PROSITE" id="PS00086">
    <property type="entry name" value="CYTOCHROME_P450"/>
    <property type="match status" value="1"/>
</dbReference>
<organism>
    <name type="scientific">Aspergillus calidoustus</name>
    <dbReference type="NCBI Taxonomy" id="454130"/>
    <lineage>
        <taxon>Eukaryota</taxon>
        <taxon>Fungi</taxon>
        <taxon>Dikarya</taxon>
        <taxon>Ascomycota</taxon>
        <taxon>Pezizomycotina</taxon>
        <taxon>Eurotiomycetes</taxon>
        <taxon>Eurotiomycetidae</taxon>
        <taxon>Eurotiales</taxon>
        <taxon>Aspergillaceae</taxon>
        <taxon>Aspergillus</taxon>
        <taxon>Aspergillus subgen. Nidulantes</taxon>
    </lineage>
</organism>
<feature type="chain" id="PRO_0000454533" description="Cytochrome P450 monooxygenase drtD">
    <location>
        <begin position="1"/>
        <end position="524"/>
    </location>
</feature>
<feature type="transmembrane region" description="Helical" evidence="2">
    <location>
        <begin position="2"/>
        <end position="22"/>
    </location>
</feature>
<feature type="binding site" description="axial binding residue" evidence="1">
    <location>
        <position position="418"/>
    </location>
    <ligand>
        <name>heme</name>
        <dbReference type="ChEBI" id="CHEBI:30413"/>
    </ligand>
    <ligandPart>
        <name>Fe</name>
        <dbReference type="ChEBI" id="CHEBI:18248"/>
    </ligandPart>
</feature>
<name>DRTD_ASPCI</name>
<gene>
    <name evidence="4" type="primary">drtD</name>
    <name type="ORF">ASPCAL02980</name>
</gene>
<accession>A0A0U5GRB4</accession>
<comment type="function">
    <text evidence="3">Cytochrome P450 monooxygenase; part of the gene cluster that mediates the biosynthesis of various drimane-type sesquiterpene esters, compounds that exhibit diverse biological activities and are widely present in eukaryotes (PubMed:34468074). The pathway begins with the synthesis of the backbone drimenol by the terpene cyclase drtB using farnesyl pyrophosphate (FPP) as substrate (PubMed:34468074). The cytochrome P450 monooxygenase drtD is then responsible for the hydroxylations at C-6, C-9 and C-12, as well as the oxidation of hydroxyl groups at C-6 and C-11 to a ketone and an aldehyde, respectively (PubMed:34468074). Then, the biosynthesis can go in two directions, either the hydroxylated drimenol is further hydroxylated at C-2 and C-3 by an enzyme(s) not associated with the drt cluster, or the FAD-binding oxidoreductase drtC further oxidizes C-11 or C-12 to form the butyrolactone ring (PubMed:34468074). DrtB, drtD and drtC are solely responsible for the formation of the different drimane structures observed during drimane sesquiterpenes biosynthesis (PubMed:34468074). The polyketide synthase drtA synthesizes different lengths (C6 and C8) of PKS chains, which are then oxidized to varying degrees by the short-chain dehydrogenase drtF (PubMed:34468074). Finally, these PKS chains are transferred onto drimane sesquiterpenes by the acyltransferase drtE, forming the sesquiterpene esters (PubMed:34468074). In addition to the different fatty acyl-CoA chains produced by drtA, drtE is also able to use cinnamoyl-CoA as a substrate (PubMed:34468074).</text>
</comment>
<comment type="cofactor">
    <cofactor evidence="1">
        <name>heme</name>
        <dbReference type="ChEBI" id="CHEBI:30413"/>
    </cofactor>
</comment>
<comment type="pathway">
    <text evidence="3">Secondary metabolite biosynthesis; terpenoid biosynthesis.</text>
</comment>
<comment type="subcellular location">
    <subcellularLocation>
        <location evidence="2">Membrane</location>
        <topology evidence="2">Single-pass membrane protein</topology>
    </subcellularLocation>
</comment>
<comment type="disruption phenotype">
    <text evidence="3">Abolishes the production of all the drimane sesquiterpene.</text>
</comment>
<comment type="miscellaneous">
    <text evidence="3">The various drimane-type sesquiterpene esters produced by the A.calidoustus drt cluster include asperiene C, asperiene A, (6-Strobilactone-B) ester of (E,E)-6-carbonyl-7-hydroxy-2,4-octadienoic acid, ustusolate A, ustusolate C, ustusolide E, ustusoic acid A, (2'E,4'E)-6-(1'-carboxyhexa-2',4',-diene)-9-hydroxy-drim-7-ene-11,12-olide, RES-1149-2, as well as the 3 newly identified compounds calidoustene A, calidoustene B and calidoustene C.</text>
</comment>
<comment type="similarity">
    <text evidence="5">Belongs to the cytochrome P450 family.</text>
</comment>